<evidence type="ECO:0000250" key="1">
    <source>
        <dbReference type="UniProtKB" id="P78344"/>
    </source>
</evidence>
<evidence type="ECO:0000255" key="2">
    <source>
        <dbReference type="PROSITE-ProRule" id="PRU00695"/>
    </source>
</evidence>
<evidence type="ECO:0000255" key="3">
    <source>
        <dbReference type="PROSITE-ProRule" id="PRU00698"/>
    </source>
</evidence>
<evidence type="ECO:0000256" key="4">
    <source>
        <dbReference type="SAM" id="MobiDB-lite"/>
    </source>
</evidence>
<evidence type="ECO:0000305" key="5"/>
<evidence type="ECO:0000312" key="6">
    <source>
        <dbReference type="EMBL" id="AAL30507.1"/>
    </source>
</evidence>
<dbReference type="EMBL" id="BC122631">
    <property type="protein sequence ID" value="AAI22632.1"/>
    <property type="molecule type" value="mRNA"/>
</dbReference>
<dbReference type="EMBL" id="AF420315">
    <property type="protein sequence ID" value="AAL30507.1"/>
    <property type="molecule type" value="Genomic_DNA"/>
</dbReference>
<dbReference type="EMBL" id="AF011353">
    <property type="protein sequence ID" value="AAB64296.1"/>
    <property type="molecule type" value="mRNA"/>
</dbReference>
<dbReference type="RefSeq" id="NP_001093329.1">
    <property type="nucleotide sequence ID" value="NM_001099859.1"/>
</dbReference>
<dbReference type="SMR" id="Q95L46"/>
<dbReference type="FunCoup" id="Q95L46">
    <property type="interactions" value="2985"/>
</dbReference>
<dbReference type="STRING" id="9913.ENSBTAP00000049614"/>
<dbReference type="PaxDb" id="9913-ENSBTAP00000049614"/>
<dbReference type="GeneID" id="286870"/>
<dbReference type="KEGG" id="bta:286870"/>
<dbReference type="CTD" id="1982"/>
<dbReference type="eggNOG" id="KOG0401">
    <property type="taxonomic scope" value="Eukaryota"/>
</dbReference>
<dbReference type="InParanoid" id="Q95L46"/>
<dbReference type="OrthoDB" id="514777at2759"/>
<dbReference type="Proteomes" id="UP000009136">
    <property type="component" value="Unplaced"/>
</dbReference>
<dbReference type="GO" id="GO:0016281">
    <property type="term" value="C:eukaryotic translation initiation factor 4F complex"/>
    <property type="evidence" value="ECO:0000250"/>
    <property type="project" value="UniProtKB"/>
</dbReference>
<dbReference type="GO" id="GO:0003729">
    <property type="term" value="F:mRNA binding"/>
    <property type="evidence" value="ECO:0000318"/>
    <property type="project" value="GO_Central"/>
</dbReference>
<dbReference type="GO" id="GO:0008135">
    <property type="term" value="F:translation factor activity, RNA binding"/>
    <property type="evidence" value="ECO:0000250"/>
    <property type="project" value="UniProtKB"/>
</dbReference>
<dbReference type="GO" id="GO:0003743">
    <property type="term" value="F:translation initiation factor activity"/>
    <property type="evidence" value="ECO:0000250"/>
    <property type="project" value="UniProtKB"/>
</dbReference>
<dbReference type="GO" id="GO:0006446">
    <property type="term" value="P:regulation of translational initiation"/>
    <property type="evidence" value="ECO:0000250"/>
    <property type="project" value="UniProtKB"/>
</dbReference>
<dbReference type="GO" id="GO:0006413">
    <property type="term" value="P:translational initiation"/>
    <property type="evidence" value="ECO:0000318"/>
    <property type="project" value="GO_Central"/>
</dbReference>
<dbReference type="CDD" id="cd11559">
    <property type="entry name" value="W2_eIF4G1_like"/>
    <property type="match status" value="1"/>
</dbReference>
<dbReference type="FunFam" id="1.25.40.180:FF:000007">
    <property type="entry name" value="Eukaryotic translation initiation factor 4 gamma 2"/>
    <property type="match status" value="1"/>
</dbReference>
<dbReference type="FunFam" id="1.25.40.180:FF:000011">
    <property type="entry name" value="Eukaryotic translation initiation factor 4 gamma 2"/>
    <property type="match status" value="1"/>
</dbReference>
<dbReference type="FunFam" id="1.25.40.180:FF:000017">
    <property type="entry name" value="Eukaryotic translation initiation factor 4 gamma 2"/>
    <property type="match status" value="1"/>
</dbReference>
<dbReference type="Gene3D" id="1.25.40.180">
    <property type="match status" value="3"/>
</dbReference>
<dbReference type="InterPro" id="IPR016024">
    <property type="entry name" value="ARM-type_fold"/>
</dbReference>
<dbReference type="InterPro" id="IPR003891">
    <property type="entry name" value="Initiation_fac_eIF4g_MI"/>
</dbReference>
<dbReference type="InterPro" id="IPR003890">
    <property type="entry name" value="MIF4G-like_typ-3"/>
</dbReference>
<dbReference type="InterPro" id="IPR003307">
    <property type="entry name" value="W2_domain"/>
</dbReference>
<dbReference type="PANTHER" id="PTHR23253">
    <property type="entry name" value="EUKARYOTIC TRANSLATION INITIATION FACTOR 4 GAMMA"/>
    <property type="match status" value="1"/>
</dbReference>
<dbReference type="PANTHER" id="PTHR23253:SF9">
    <property type="entry name" value="EUKARYOTIC TRANSLATION INITIATION FACTOR 4 GAMMA 2"/>
    <property type="match status" value="1"/>
</dbReference>
<dbReference type="Pfam" id="PF02847">
    <property type="entry name" value="MA3"/>
    <property type="match status" value="1"/>
</dbReference>
<dbReference type="Pfam" id="PF02854">
    <property type="entry name" value="MIF4G"/>
    <property type="match status" value="1"/>
</dbReference>
<dbReference type="Pfam" id="PF02020">
    <property type="entry name" value="W2"/>
    <property type="match status" value="1"/>
</dbReference>
<dbReference type="SMART" id="SM00515">
    <property type="entry name" value="eIF5C"/>
    <property type="match status" value="1"/>
</dbReference>
<dbReference type="SMART" id="SM00544">
    <property type="entry name" value="MA3"/>
    <property type="match status" value="1"/>
</dbReference>
<dbReference type="SMART" id="SM00543">
    <property type="entry name" value="MIF4G"/>
    <property type="match status" value="1"/>
</dbReference>
<dbReference type="SUPFAM" id="SSF48371">
    <property type="entry name" value="ARM repeat"/>
    <property type="match status" value="3"/>
</dbReference>
<dbReference type="PROSITE" id="PS51366">
    <property type="entry name" value="MI"/>
    <property type="match status" value="1"/>
</dbReference>
<dbReference type="PROSITE" id="PS51363">
    <property type="entry name" value="W2"/>
    <property type="match status" value="1"/>
</dbReference>
<protein>
    <recommendedName>
        <fullName>Eukaryotic translation initiation factor 4 gamma 2</fullName>
        <shortName>eIF-4-gamma 2</shortName>
        <shortName>eIF-4G 2</shortName>
        <shortName>eIF4G 2</shortName>
    </recommendedName>
    <alternativeName>
        <fullName>p97</fullName>
    </alternativeName>
</protein>
<keyword id="KW-0007">Acetylation</keyword>
<keyword id="KW-0396">Initiation factor</keyword>
<keyword id="KW-1017">Isopeptide bond</keyword>
<keyword id="KW-0488">Methylation</keyword>
<keyword id="KW-0597">Phosphoprotein</keyword>
<keyword id="KW-0648">Protein biosynthesis</keyword>
<keyword id="KW-1185">Reference proteome</keyword>
<keyword id="KW-0678">Repressor</keyword>
<keyword id="KW-0810">Translation regulation</keyword>
<keyword id="KW-0832">Ubl conjugation</keyword>
<organism evidence="6">
    <name type="scientific">Bos taurus</name>
    <name type="common">Bovine</name>
    <dbReference type="NCBI Taxonomy" id="9913"/>
    <lineage>
        <taxon>Eukaryota</taxon>
        <taxon>Metazoa</taxon>
        <taxon>Chordata</taxon>
        <taxon>Craniata</taxon>
        <taxon>Vertebrata</taxon>
        <taxon>Euteleostomi</taxon>
        <taxon>Mammalia</taxon>
        <taxon>Eutheria</taxon>
        <taxon>Laurasiatheria</taxon>
        <taxon>Artiodactyla</taxon>
        <taxon>Ruminantia</taxon>
        <taxon>Pecora</taxon>
        <taxon>Bovidae</taxon>
        <taxon>Bovinae</taxon>
        <taxon>Bos</taxon>
    </lineage>
</organism>
<name>IF4G2_BOVIN</name>
<comment type="function">
    <text evidence="1">Appears to play a role in the switch from cap-dependent to IRES-mediated translation during mitosis, apoptosis and viral infection. Cleaved by some caspases and viral proteases (By similarity).</text>
</comment>
<comment type="subunit">
    <text evidence="1">Interacts with the serine/threonine protein kinases MKNK1 and MKNK2. Binds EIF4A and EIF3. Interacts with MIF4GD (By similarity). Interacts with DAZAP2 (By similarity).</text>
</comment>
<comment type="PTM">
    <text evidence="1">Phosphorylation; hyperphosphorylated during mitosis.</text>
</comment>
<comment type="similarity">
    <text evidence="5">Belongs to the eukaryotic initiation factor 4G family.</text>
</comment>
<accession>Q95L46</accession>
<accession>A8R456</accession>
<accession>O18948</accession>
<reference evidence="6" key="1">
    <citation type="submission" date="2006-08" db="EMBL/GenBank/DDBJ databases">
        <authorList>
            <consortium name="NIH - Mammalian Gene Collection (MGC) project"/>
        </authorList>
    </citation>
    <scope>NUCLEOTIDE SEQUENCE [LARGE SCALE MRNA]</scope>
    <source>
        <strain>Hereford</strain>
        <tissue>Brain cortex</tissue>
    </source>
</reference>
<reference evidence="6" key="2">
    <citation type="submission" date="2001-09" db="EMBL/GenBank/DDBJ databases">
        <authorList>
            <person name="Smith T.P.L."/>
            <person name="Bennett G.L."/>
        </authorList>
    </citation>
    <scope>NUCLEOTIDE SEQUENCE [GENOMIC DNA] OF 514-649</scope>
</reference>
<reference evidence="5" key="3">
    <citation type="journal article" date="1999" name="VASA">
        <title>Differential gene expression of vascular smooth muscle cells. Detection by RNA arbitrarily primed polymerase chain reaction.</title>
        <authorList>
            <person name="Alfke H."/>
            <person name="Stumm G."/>
            <person name="Schnieder I."/>
            <person name="Klose K.J."/>
            <person name="Schlegel J."/>
        </authorList>
    </citation>
    <scope>NUCLEOTIDE SEQUENCE [MRNA] OF 539-639</scope>
    <source>
        <tissue>Vascular smooth muscle</tissue>
    </source>
</reference>
<feature type="chain" id="PRO_0000213324" description="Eukaryotic translation initiation factor 4 gamma 2">
    <location>
        <begin position="1"/>
        <end position="907"/>
    </location>
</feature>
<feature type="domain" description="MIF4G" evidence="3">
    <location>
        <begin position="78"/>
        <end position="308"/>
    </location>
</feature>
<feature type="domain" description="MI" evidence="3">
    <location>
        <begin position="543"/>
        <end position="666"/>
    </location>
</feature>
<feature type="domain" description="W2" evidence="2">
    <location>
        <begin position="720"/>
        <end position="904"/>
    </location>
</feature>
<feature type="region of interest" description="Disordered" evidence="4">
    <location>
        <begin position="1"/>
        <end position="71"/>
    </location>
</feature>
<feature type="region of interest" description="Disordered" evidence="4">
    <location>
        <begin position="498"/>
        <end position="541"/>
    </location>
</feature>
<feature type="compositionally biased region" description="Polar residues" evidence="4">
    <location>
        <begin position="503"/>
        <end position="516"/>
    </location>
</feature>
<feature type="modified residue" description="N-acetylmethionine" evidence="1">
    <location>
        <position position="1"/>
    </location>
</feature>
<feature type="modified residue" description="Phosphoserine" evidence="1">
    <location>
        <position position="11"/>
    </location>
</feature>
<feature type="modified residue" description="Phosphothreonine" evidence="1">
    <location>
        <position position="89"/>
    </location>
</feature>
<feature type="modified residue" description="Omega-N-methylarginine" evidence="1">
    <location>
        <position position="360"/>
    </location>
</feature>
<feature type="modified residue" description="Phosphoserine" evidence="1">
    <location>
        <position position="395"/>
    </location>
</feature>
<feature type="modified residue" description="N6-methyllysine" evidence="1">
    <location>
        <position position="431"/>
    </location>
</feature>
<feature type="modified residue" description="Phosphoserine" evidence="1">
    <location>
        <position position="443"/>
    </location>
</feature>
<feature type="modified residue" description="Omega-N-methylarginine" evidence="1">
    <location>
        <position position="505"/>
    </location>
</feature>
<feature type="modified residue" description="Phosphothreonine" evidence="1">
    <location>
        <position position="508"/>
    </location>
</feature>
<feature type="modified residue" description="Phosphothreonine" evidence="1">
    <location>
        <position position="514"/>
    </location>
</feature>
<feature type="modified residue" description="Phosphoserine" evidence="1">
    <location>
        <position position="902"/>
    </location>
</feature>
<feature type="cross-link" description="Glycyl lysine isopeptide (Lys-Gly) (interchain with G-Cter in SUMO2)" evidence="1">
    <location>
        <position position="575"/>
    </location>
</feature>
<feature type="sequence conflict" description="In Ref. 1; AAI22632." evidence="5" ref="1">
    <original>N</original>
    <variation>Y</variation>
    <location>
        <position position="557"/>
    </location>
</feature>
<feature type="sequence conflict" description="In Ref. 3; AAB64296." evidence="5" ref="3">
    <original>Q</original>
    <variation>R</variation>
    <location>
        <position position="628"/>
    </location>
</feature>
<proteinExistence type="evidence at transcript level"/>
<gene>
    <name type="primary">EIF4G2</name>
</gene>
<sequence>MESAIAEGGASRFSASSGGGGSRGAPQHYPKTAGNSEFLGKTPGQNAQKWIPARSTRRDDNSAANNSANEKERHDAIFRKVRGILNKLTPEKFDKLCLELLNVGVESKLILKGVILLIVDKALEEPKYSSLYAQLCLRLAEDAPNFDGPAAEGQPGQKQSTTFRRLLISKLQDEFENRTRNVDVYDKRENPLLPEEEEQRAIAKIKMLGNIKFIGELGKLDLIHESILHKCIKTLLEKKKRVQLKDMGEDLECLCQIMRTVGPRLDHERAKSLMDQYFARMCSLMLSKELPARIRFLLQDTVELREHHWVPRKAFLDNGPKTINQIRQDAVKDLGVFIPAPMAQGMRSDFFLEGPFMPPRMKMDRDPLGGLADMFGQMPGSGIGTGPGVIQDRFSPTMGRHRSNQLFNGHGGHIMPPTQSQFGEMGGKFMKSQGLSQLYHNQSQGLLSQLQGQSKDMPPRFSKKGQLNADEISLRPAQSFLMNKNQVPKLQPQITMIPPSAQPPRTQTPPLGQTPQLGLKTNPPLIQEKPAKTSKKPPPSKEELLKLTETVVTEYLNSGNANEAVNGVREMRAPKHFLPEMLSKVIILSLDRSDEDKEKASSLISLLKQEGIATSDNFMQAFLNVLDQCPKLEVDIPLVKSYLAQFAARAIISELVSISELAQPLESGTHFPLFLLCLQQLAKLQDREWLTELFQQSKVNMQKMLPEIDQNKDRMLEILEGKGLSFLFPLLKLEKELLKQIKLDPSPQTIYKWIKDNISPKLHVDKGFVNILMTSFLQYISSEVNPPSDETDSSSAPSKEQLEQEKQLLLSFKPVMQKFLHDHVDLQVSALYALQVHCYNSNFPKGMLLRFFVHFYDMEIIEEEAFLAWKEDITQEFPGKGKALFQVNQWLTWLETAEEEESEEEAD</sequence>